<gene>
    <name evidence="1" type="primary">rpsI</name>
    <name type="ordered locus">Lcho_3451</name>
</gene>
<evidence type="ECO:0000255" key="1">
    <source>
        <dbReference type="HAMAP-Rule" id="MF_00532"/>
    </source>
</evidence>
<evidence type="ECO:0000305" key="2"/>
<protein>
    <recommendedName>
        <fullName evidence="1">Small ribosomal subunit protein uS9</fullName>
    </recommendedName>
    <alternativeName>
        <fullName evidence="2">30S ribosomal protein S9</fullName>
    </alternativeName>
</protein>
<proteinExistence type="inferred from homology"/>
<organism>
    <name type="scientific">Leptothrix cholodnii (strain ATCC 51168 / LMG 8142 / SP-6)</name>
    <name type="common">Leptothrix discophora (strain SP-6)</name>
    <dbReference type="NCBI Taxonomy" id="395495"/>
    <lineage>
        <taxon>Bacteria</taxon>
        <taxon>Pseudomonadati</taxon>
        <taxon>Pseudomonadota</taxon>
        <taxon>Betaproteobacteria</taxon>
        <taxon>Burkholderiales</taxon>
        <taxon>Sphaerotilaceae</taxon>
        <taxon>Leptothrix</taxon>
    </lineage>
</organism>
<accession>B1Y3K6</accession>
<sequence>MIGEWNYGTGRRKSSVARVFIKKGTGKIIVNGKTVEEYFGRQTSIMICKQPLFLTNNAEAFDIKVNVHGGGESGQAGAVRHGVTRALIDYDAALKPELSNAGFVTRDAREVERKKVGLHGARRRKQFSKR</sequence>
<reference key="1">
    <citation type="submission" date="2008-03" db="EMBL/GenBank/DDBJ databases">
        <title>Complete sequence of Leptothrix cholodnii SP-6.</title>
        <authorList>
            <consortium name="US DOE Joint Genome Institute"/>
            <person name="Copeland A."/>
            <person name="Lucas S."/>
            <person name="Lapidus A."/>
            <person name="Glavina del Rio T."/>
            <person name="Dalin E."/>
            <person name="Tice H."/>
            <person name="Bruce D."/>
            <person name="Goodwin L."/>
            <person name="Pitluck S."/>
            <person name="Chertkov O."/>
            <person name="Brettin T."/>
            <person name="Detter J.C."/>
            <person name="Han C."/>
            <person name="Kuske C.R."/>
            <person name="Schmutz J."/>
            <person name="Larimer F."/>
            <person name="Land M."/>
            <person name="Hauser L."/>
            <person name="Kyrpides N."/>
            <person name="Lykidis A."/>
            <person name="Emerson D."/>
            <person name="Richardson P."/>
        </authorList>
    </citation>
    <scope>NUCLEOTIDE SEQUENCE [LARGE SCALE GENOMIC DNA]</scope>
    <source>
        <strain>ATCC 51168 / LMG 8142 / SP-6</strain>
    </source>
</reference>
<feature type="chain" id="PRO_1000128135" description="Small ribosomal subunit protein uS9">
    <location>
        <begin position="1"/>
        <end position="130"/>
    </location>
</feature>
<keyword id="KW-1185">Reference proteome</keyword>
<keyword id="KW-0687">Ribonucleoprotein</keyword>
<keyword id="KW-0689">Ribosomal protein</keyword>
<comment type="similarity">
    <text evidence="1">Belongs to the universal ribosomal protein uS9 family.</text>
</comment>
<dbReference type="EMBL" id="CP001013">
    <property type="protein sequence ID" value="ACB35709.1"/>
    <property type="molecule type" value="Genomic_DNA"/>
</dbReference>
<dbReference type="RefSeq" id="WP_012348456.1">
    <property type="nucleotide sequence ID" value="NC_010524.1"/>
</dbReference>
<dbReference type="SMR" id="B1Y3K6"/>
<dbReference type="STRING" id="395495.Lcho_3451"/>
<dbReference type="KEGG" id="lch:Lcho_3451"/>
<dbReference type="eggNOG" id="COG0103">
    <property type="taxonomic scope" value="Bacteria"/>
</dbReference>
<dbReference type="HOGENOM" id="CLU_046483_2_1_4"/>
<dbReference type="OrthoDB" id="9803965at2"/>
<dbReference type="Proteomes" id="UP000001693">
    <property type="component" value="Chromosome"/>
</dbReference>
<dbReference type="GO" id="GO:0022627">
    <property type="term" value="C:cytosolic small ribosomal subunit"/>
    <property type="evidence" value="ECO:0007669"/>
    <property type="project" value="TreeGrafter"/>
</dbReference>
<dbReference type="GO" id="GO:0003723">
    <property type="term" value="F:RNA binding"/>
    <property type="evidence" value="ECO:0007669"/>
    <property type="project" value="TreeGrafter"/>
</dbReference>
<dbReference type="GO" id="GO:0003735">
    <property type="term" value="F:structural constituent of ribosome"/>
    <property type="evidence" value="ECO:0007669"/>
    <property type="project" value="InterPro"/>
</dbReference>
<dbReference type="GO" id="GO:0006412">
    <property type="term" value="P:translation"/>
    <property type="evidence" value="ECO:0007669"/>
    <property type="project" value="UniProtKB-UniRule"/>
</dbReference>
<dbReference type="FunFam" id="3.30.230.10:FF:000001">
    <property type="entry name" value="30S ribosomal protein S9"/>
    <property type="match status" value="1"/>
</dbReference>
<dbReference type="Gene3D" id="3.30.230.10">
    <property type="match status" value="1"/>
</dbReference>
<dbReference type="HAMAP" id="MF_00532_B">
    <property type="entry name" value="Ribosomal_uS9_B"/>
    <property type="match status" value="1"/>
</dbReference>
<dbReference type="InterPro" id="IPR020568">
    <property type="entry name" value="Ribosomal_Su5_D2-typ_SF"/>
</dbReference>
<dbReference type="InterPro" id="IPR000754">
    <property type="entry name" value="Ribosomal_uS9"/>
</dbReference>
<dbReference type="InterPro" id="IPR023035">
    <property type="entry name" value="Ribosomal_uS9_bac/plastid"/>
</dbReference>
<dbReference type="InterPro" id="IPR020574">
    <property type="entry name" value="Ribosomal_uS9_CS"/>
</dbReference>
<dbReference type="InterPro" id="IPR014721">
    <property type="entry name" value="Ribsml_uS5_D2-typ_fold_subgr"/>
</dbReference>
<dbReference type="NCBIfam" id="NF001099">
    <property type="entry name" value="PRK00132.1"/>
    <property type="match status" value="1"/>
</dbReference>
<dbReference type="PANTHER" id="PTHR21569">
    <property type="entry name" value="RIBOSOMAL PROTEIN S9"/>
    <property type="match status" value="1"/>
</dbReference>
<dbReference type="PANTHER" id="PTHR21569:SF1">
    <property type="entry name" value="SMALL RIBOSOMAL SUBUNIT PROTEIN US9M"/>
    <property type="match status" value="1"/>
</dbReference>
<dbReference type="Pfam" id="PF00380">
    <property type="entry name" value="Ribosomal_S9"/>
    <property type="match status" value="1"/>
</dbReference>
<dbReference type="SUPFAM" id="SSF54211">
    <property type="entry name" value="Ribosomal protein S5 domain 2-like"/>
    <property type="match status" value="1"/>
</dbReference>
<dbReference type="PROSITE" id="PS00360">
    <property type="entry name" value="RIBOSOMAL_S9"/>
    <property type="match status" value="1"/>
</dbReference>
<name>RS9_LEPCP</name>